<comment type="function">
    <text evidence="2">Idn operon regulator. May repress gntKU and gntT genes when growing on L-idonate.</text>
</comment>
<gene>
    <name type="primary">idnR</name>
    <name type="synonym">yjgS</name>
    <name type="ordered locus">b4264</name>
    <name type="ordered locus">JW4221</name>
</gene>
<keyword id="KW-0238">DNA-binding</keyword>
<keyword id="KW-0311">Gluconate utilization</keyword>
<keyword id="KW-1185">Reference proteome</keyword>
<keyword id="KW-0804">Transcription</keyword>
<keyword id="KW-0805">Transcription regulation</keyword>
<organism>
    <name type="scientific">Escherichia coli (strain K12)</name>
    <dbReference type="NCBI Taxonomy" id="83333"/>
    <lineage>
        <taxon>Bacteria</taxon>
        <taxon>Pseudomonadati</taxon>
        <taxon>Pseudomonadota</taxon>
        <taxon>Gammaproteobacteria</taxon>
        <taxon>Enterobacterales</taxon>
        <taxon>Enterobacteriaceae</taxon>
        <taxon>Escherichia</taxon>
    </lineage>
</organism>
<feature type="chain" id="PRO_0000107960" description="HTH-type transcriptional regulator IdnR">
    <location>
        <begin position="1"/>
        <end position="332"/>
    </location>
</feature>
<feature type="domain" description="HTH lacI-type" evidence="1">
    <location>
        <begin position="6"/>
        <end position="60"/>
    </location>
</feature>
<feature type="DNA-binding region" description="H-T-H motif" evidence="1">
    <location>
        <begin position="8"/>
        <end position="27"/>
    </location>
</feature>
<name>IDNR_ECOLI</name>
<protein>
    <recommendedName>
        <fullName>HTH-type transcriptional regulator IdnR</fullName>
    </recommendedName>
    <alternativeName>
        <fullName>L-idonate regulatory protein</fullName>
    </alternativeName>
</protein>
<proteinExistence type="predicted"/>
<accession>P39343</accession>
<accession>Q2M645</accession>
<dbReference type="EMBL" id="U14003">
    <property type="protein sequence ID" value="AAA97161.1"/>
    <property type="molecule type" value="Genomic_DNA"/>
</dbReference>
<dbReference type="EMBL" id="U00096">
    <property type="protein sequence ID" value="AAC77221.1"/>
    <property type="molecule type" value="Genomic_DNA"/>
</dbReference>
<dbReference type="EMBL" id="AP009048">
    <property type="protein sequence ID" value="BAE78261.1"/>
    <property type="molecule type" value="Genomic_DNA"/>
</dbReference>
<dbReference type="PIR" id="S56490">
    <property type="entry name" value="S56490"/>
</dbReference>
<dbReference type="RefSeq" id="NP_418685.1">
    <property type="nucleotide sequence ID" value="NC_000913.3"/>
</dbReference>
<dbReference type="RefSeq" id="WP_001309159.1">
    <property type="nucleotide sequence ID" value="NZ_SSUV01000014.1"/>
</dbReference>
<dbReference type="SMR" id="P39343"/>
<dbReference type="BioGRID" id="4262722">
    <property type="interactions" value="110"/>
</dbReference>
<dbReference type="FunCoup" id="P39343">
    <property type="interactions" value="22"/>
</dbReference>
<dbReference type="IntAct" id="P39343">
    <property type="interactions" value="3"/>
</dbReference>
<dbReference type="STRING" id="511145.b4264"/>
<dbReference type="PaxDb" id="511145-b4264"/>
<dbReference type="EnsemblBacteria" id="AAC77221">
    <property type="protein sequence ID" value="AAC77221"/>
    <property type="gene ID" value="b4264"/>
</dbReference>
<dbReference type="GeneID" id="949058"/>
<dbReference type="KEGG" id="ecj:JW4221"/>
<dbReference type="KEGG" id="eco:b4264"/>
<dbReference type="KEGG" id="ecoc:C3026_23000"/>
<dbReference type="PATRIC" id="fig|1411691.4.peg.2439"/>
<dbReference type="EchoBASE" id="EB2427"/>
<dbReference type="eggNOG" id="COG1609">
    <property type="taxonomic scope" value="Bacteria"/>
</dbReference>
<dbReference type="HOGENOM" id="CLU_037628_6_3_6"/>
<dbReference type="InParanoid" id="P39343"/>
<dbReference type="OMA" id="HIDYYKV"/>
<dbReference type="OrthoDB" id="5681588at2"/>
<dbReference type="PhylomeDB" id="P39343"/>
<dbReference type="BioCyc" id="EcoCyc:G7891-MONOMER"/>
<dbReference type="PRO" id="PR:P39343"/>
<dbReference type="Proteomes" id="UP000000625">
    <property type="component" value="Chromosome"/>
</dbReference>
<dbReference type="GO" id="GO:0003700">
    <property type="term" value="F:DNA-binding transcription factor activity"/>
    <property type="evidence" value="ECO:0000318"/>
    <property type="project" value="GO_Central"/>
</dbReference>
<dbReference type="GO" id="GO:0000976">
    <property type="term" value="F:transcription cis-regulatory region binding"/>
    <property type="evidence" value="ECO:0000318"/>
    <property type="project" value="GO_Central"/>
</dbReference>
<dbReference type="GO" id="GO:0019521">
    <property type="term" value="P:D-gluconate metabolic process"/>
    <property type="evidence" value="ECO:0007669"/>
    <property type="project" value="UniProtKB-KW"/>
</dbReference>
<dbReference type="GO" id="GO:0006355">
    <property type="term" value="P:regulation of DNA-templated transcription"/>
    <property type="evidence" value="ECO:0000318"/>
    <property type="project" value="GO_Central"/>
</dbReference>
<dbReference type="CDD" id="cd01392">
    <property type="entry name" value="HTH_LacI"/>
    <property type="match status" value="1"/>
</dbReference>
<dbReference type="CDD" id="cd01575">
    <property type="entry name" value="PBP1_GntR"/>
    <property type="match status" value="1"/>
</dbReference>
<dbReference type="Gene3D" id="3.40.50.2300">
    <property type="match status" value="2"/>
</dbReference>
<dbReference type="Gene3D" id="1.10.260.40">
    <property type="entry name" value="lambda repressor-like DNA-binding domains"/>
    <property type="match status" value="1"/>
</dbReference>
<dbReference type="InterPro" id="IPR001387">
    <property type="entry name" value="Cro/C1-type_HTH"/>
</dbReference>
<dbReference type="InterPro" id="IPR000843">
    <property type="entry name" value="HTH_LacI"/>
</dbReference>
<dbReference type="InterPro" id="IPR010982">
    <property type="entry name" value="Lambda_DNA-bd_dom_sf"/>
</dbReference>
<dbReference type="InterPro" id="IPR001761">
    <property type="entry name" value="Peripla_BP/Lac1_sug-bd_dom"/>
</dbReference>
<dbReference type="InterPro" id="IPR028082">
    <property type="entry name" value="Peripla_BP_I"/>
</dbReference>
<dbReference type="PANTHER" id="PTHR30146:SF37">
    <property type="entry name" value="HTH-TYPE TRANSCRIPTIONAL REGULATOR IDNR"/>
    <property type="match status" value="1"/>
</dbReference>
<dbReference type="PANTHER" id="PTHR30146">
    <property type="entry name" value="LACI-RELATED TRANSCRIPTIONAL REPRESSOR"/>
    <property type="match status" value="1"/>
</dbReference>
<dbReference type="Pfam" id="PF00356">
    <property type="entry name" value="LacI"/>
    <property type="match status" value="1"/>
</dbReference>
<dbReference type="Pfam" id="PF00532">
    <property type="entry name" value="Peripla_BP_1"/>
    <property type="match status" value="1"/>
</dbReference>
<dbReference type="SMART" id="SM00354">
    <property type="entry name" value="HTH_LACI"/>
    <property type="match status" value="1"/>
</dbReference>
<dbReference type="SUPFAM" id="SSF47413">
    <property type="entry name" value="lambda repressor-like DNA-binding domains"/>
    <property type="match status" value="1"/>
</dbReference>
<dbReference type="SUPFAM" id="SSF53822">
    <property type="entry name" value="Periplasmic binding protein-like I"/>
    <property type="match status" value="1"/>
</dbReference>
<dbReference type="PROSITE" id="PS00356">
    <property type="entry name" value="HTH_LACI_1"/>
    <property type="match status" value="1"/>
</dbReference>
<dbReference type="PROSITE" id="PS50932">
    <property type="entry name" value="HTH_LACI_2"/>
    <property type="match status" value="1"/>
</dbReference>
<sequence>MRNHRISLQDIATLAGVTKMTVSRYIRSPKKVAKETGERIAKIMEEINYIPNRAPGMLLNAQSYTLGILIPSFQNQLFADILAGIESVTSEHNYQTLIANYNYDRDSEEESVINLLSYNIDGIILSEKYHTIRTVKFLRSATIPVVELMDVQGERLDMEVGFDNRQAAFDMVCTMLEKRVRHKILYLGSKDDTRDEQRYQGYCDAMMLHNLSPLRMNPRAISSIHLGMQLMRDALSANPDLDGVFCTNDDIAMGALLLCRERNLAVPEQISIAGFHGLEIGRQMIPSLASVITPRFDIGRMAAQMLLSKIKNNDHNHNTVDLGYQIYHGNTL</sequence>
<reference key="1">
    <citation type="journal article" date="1995" name="Nucleic Acids Res.">
        <title>Analysis of the Escherichia coli genome VI: DNA sequence of the region from 92.8 through 100 minutes.</title>
        <authorList>
            <person name="Burland V.D."/>
            <person name="Plunkett G. III"/>
            <person name="Sofia H.J."/>
            <person name="Daniels D.L."/>
            <person name="Blattner F.R."/>
        </authorList>
    </citation>
    <scope>NUCLEOTIDE SEQUENCE [LARGE SCALE GENOMIC DNA]</scope>
    <source>
        <strain>K12 / MG1655 / ATCC 47076</strain>
    </source>
</reference>
<reference key="2">
    <citation type="journal article" date="1997" name="Science">
        <title>The complete genome sequence of Escherichia coli K-12.</title>
        <authorList>
            <person name="Blattner F.R."/>
            <person name="Plunkett G. III"/>
            <person name="Bloch C.A."/>
            <person name="Perna N.T."/>
            <person name="Burland V."/>
            <person name="Riley M."/>
            <person name="Collado-Vides J."/>
            <person name="Glasner J.D."/>
            <person name="Rode C.K."/>
            <person name="Mayhew G.F."/>
            <person name="Gregor J."/>
            <person name="Davis N.W."/>
            <person name="Kirkpatrick H.A."/>
            <person name="Goeden M.A."/>
            <person name="Rose D.J."/>
            <person name="Mau B."/>
            <person name="Shao Y."/>
        </authorList>
    </citation>
    <scope>NUCLEOTIDE SEQUENCE [LARGE SCALE GENOMIC DNA]</scope>
    <source>
        <strain>K12 / MG1655 / ATCC 47076</strain>
    </source>
</reference>
<reference key="3">
    <citation type="journal article" date="2006" name="Mol. Syst. Biol.">
        <title>Highly accurate genome sequences of Escherichia coli K-12 strains MG1655 and W3110.</title>
        <authorList>
            <person name="Hayashi K."/>
            <person name="Morooka N."/>
            <person name="Yamamoto Y."/>
            <person name="Fujita K."/>
            <person name="Isono K."/>
            <person name="Choi S."/>
            <person name="Ohtsubo E."/>
            <person name="Baba T."/>
            <person name="Wanner B.L."/>
            <person name="Mori H."/>
            <person name="Horiuchi T."/>
        </authorList>
    </citation>
    <scope>NUCLEOTIDE SEQUENCE [LARGE SCALE GENOMIC DNA]</scope>
    <source>
        <strain>K12 / W3110 / ATCC 27325 / DSM 5911</strain>
    </source>
</reference>
<reference key="4">
    <citation type="journal article" date="1998" name="J. Bacteriol.">
        <title>Sequence analysis of the GntII (subsidiary) system for gluconate metabolism reveals a novel pathway for L-idonic acid catabolism in Escherichia coli.</title>
        <authorList>
            <person name="Bausch C."/>
            <person name="Peekhaus N."/>
            <person name="Utz C."/>
            <person name="Blais T."/>
            <person name="Murray E."/>
            <person name="Lowary T."/>
            <person name="Conway T."/>
        </authorList>
    </citation>
    <scope>FUNCTION</scope>
</reference>
<evidence type="ECO:0000255" key="1">
    <source>
        <dbReference type="PROSITE-ProRule" id="PRU00111"/>
    </source>
</evidence>
<evidence type="ECO:0000269" key="2">
    <source>
    </source>
</evidence>